<comment type="function">
    <text evidence="2 4 5 7 8">Hematopoietic cytokine that plays an essential role in the development, expansion, and survival of naive and memory T-cells and B-cells thereby regulating the number of mature lymphocytes and maintaining lymphoid homeostasis (PubMed:25870237, PubMed:7527823). Mechanistically, exerts its biological effects through a receptor composed of IL7RA subunit and the cytokine receptor common subunit gamma/CSF2RG (PubMed:8128231). Binding to the receptor leads to activation of various kinases including JAK1 or JAK3 depending on the cell type and subsequently propagation of signals through activation of several downstream signaling pathways including the PI3K/Akt/mTOR or the JAK-STAT5 (PubMed:18523275, PubMed:20974963).</text>
</comment>
<comment type="subunit">
    <text evidence="8">Interacts with IL7R and CSF2RG.</text>
</comment>
<comment type="interaction">
    <interactant intactId="EBI-80516">
        <id>P13232</id>
    </interactant>
    <interactant intactId="EBI-80475">
        <id>P31785</id>
        <label>IL2RG</label>
    </interactant>
    <organismsDiffer>false</organismsDiffer>
    <experiments>2</experiments>
</comment>
<comment type="interaction">
    <interactant intactId="EBI-80516">
        <id>P13232</id>
    </interactant>
    <interactant intactId="EBI-80490">
        <id>P16871</id>
        <label>IL7R</label>
    </interactant>
    <organismsDiffer>false</organismsDiffer>
    <experiments>10</experiments>
</comment>
<comment type="subcellular location">
    <subcellularLocation>
        <location evidence="5">Secreted</location>
    </subcellularLocation>
</comment>
<comment type="alternative products">
    <event type="alternative splicing"/>
    <isoform>
        <id>P13232-1</id>
        <name>1</name>
        <sequence type="displayed"/>
    </isoform>
    <isoform>
        <id>P13232-2</id>
        <name>2</name>
        <sequence type="described" ref="VSP_042926"/>
    </isoform>
    <isoform>
        <id>P13232-3</id>
        <name>3</name>
        <sequence type="described" ref="VSP_047579 VSP_047580"/>
    </isoform>
</comment>
<comment type="disease" evidence="6">
    <disease id="DI-05471">
        <name>Immunodeficiency 130 with HPV-related verrucosis</name>
        <acronym>IMD130</acronym>
        <description>An autosomal recessive immunologic disorder characterized by susceptibility to human papillomavirus (HPV) infections that lead to the development of warts and verrucous or plaque-like skin lesions. There is an increased risk of skin malignancy. Some patients may also suffer from mycobacterial, herpes simplex virus (HSV), or fungal infections. Immunologic workup shows T-cell lymphopenia, particularly affecting CD4+ T cells.</description>
        <dbReference type="MIM" id="618309"/>
    </disease>
    <text>The disease may be caused by variants affecting the gene represented in this entry.</text>
</comment>
<comment type="similarity">
    <text evidence="11">Belongs to the IL-7/IL-9 family.</text>
</comment>
<comment type="online information" name="Wikipedia">
    <link uri="https://en.wikipedia.org/wiki/Interleukin_7"/>
    <text>Interleukin-7 entry</text>
</comment>
<protein>
    <recommendedName>
        <fullName>Interleukin-7</fullName>
        <shortName>IL-7</shortName>
    </recommendedName>
</protein>
<feature type="signal peptide">
    <location>
        <begin position="1"/>
        <end position="25"/>
    </location>
</feature>
<feature type="chain" id="PRO_0000015623" description="Interleukin-7">
    <location>
        <begin position="26"/>
        <end position="177"/>
    </location>
</feature>
<feature type="glycosylation site" description="N-linked (GlcNAc...) asparagine" evidence="1">
    <location>
        <position position="95"/>
    </location>
</feature>
<feature type="glycosylation site" description="N-linked (GlcNAc...) asparagine" evidence="1">
    <location>
        <position position="116"/>
    </location>
</feature>
<feature type="glycosylation site" description="N-linked (GlcNAc...) asparagine" evidence="1">
    <location>
        <position position="141"/>
    </location>
</feature>
<feature type="disulfide bond" evidence="3 9">
    <location>
        <begin position="27"/>
        <end position="166"/>
    </location>
</feature>
<feature type="disulfide bond" evidence="3 9">
    <location>
        <begin position="59"/>
        <end position="154"/>
    </location>
</feature>
<feature type="disulfide bond" evidence="3 9">
    <location>
        <begin position="72"/>
        <end position="117"/>
    </location>
</feature>
<feature type="splice variant" id="VSP_047579" description="In isoform 3." evidence="10">
    <location>
        <begin position="1"/>
        <end position="51"/>
    </location>
</feature>
<feature type="splice variant" id="VSP_047580" description="In isoform 3." evidence="10">
    <location>
        <begin position="77"/>
        <end position="138"/>
    </location>
</feature>
<feature type="splice variant" id="VSP_042926" description="In isoform 2." evidence="10">
    <location>
        <begin position="77"/>
        <end position="120"/>
    </location>
</feature>
<feature type="sequence variant" id="VAR_081934" description="In IMD130." evidence="6">
    <location>
        <begin position="69"/>
        <end position="177"/>
    </location>
</feature>
<feature type="helix" evidence="12">
    <location>
        <begin position="34"/>
        <end position="39"/>
    </location>
</feature>
<feature type="helix" evidence="12">
    <location>
        <begin position="41"/>
        <end position="50"/>
    </location>
</feature>
<feature type="strand" evidence="12">
    <location>
        <begin position="53"/>
        <end position="55"/>
    </location>
</feature>
<feature type="turn" evidence="13">
    <location>
        <begin position="57"/>
        <end position="59"/>
    </location>
</feature>
<feature type="helix" evidence="12">
    <location>
        <begin position="65"/>
        <end position="69"/>
    </location>
</feature>
<feature type="helix" evidence="12">
    <location>
        <begin position="77"/>
        <end position="89"/>
    </location>
</feature>
<feature type="helix" evidence="12">
    <location>
        <begin position="99"/>
        <end position="115"/>
    </location>
</feature>
<feature type="helix" evidence="12">
    <location>
        <begin position="153"/>
        <end position="171"/>
    </location>
</feature>
<feature type="turn" evidence="12">
    <location>
        <begin position="172"/>
        <end position="176"/>
    </location>
</feature>
<evidence type="ECO:0000255" key="1"/>
<evidence type="ECO:0000269" key="2">
    <source>
    </source>
</evidence>
<evidence type="ECO:0000269" key="3">
    <source>
    </source>
</evidence>
<evidence type="ECO:0000269" key="4">
    <source>
    </source>
</evidence>
<evidence type="ECO:0000269" key="5">
    <source>
    </source>
</evidence>
<evidence type="ECO:0000269" key="6">
    <source>
    </source>
</evidence>
<evidence type="ECO:0000269" key="7">
    <source>
    </source>
</evidence>
<evidence type="ECO:0000269" key="8">
    <source>
    </source>
</evidence>
<evidence type="ECO:0000269" key="9">
    <source>
    </source>
</evidence>
<evidence type="ECO:0000303" key="10">
    <source ref="3"/>
</evidence>
<evidence type="ECO:0000305" key="11"/>
<evidence type="ECO:0007829" key="12">
    <source>
        <dbReference type="PDB" id="3DI2"/>
    </source>
</evidence>
<evidence type="ECO:0007829" key="13">
    <source>
        <dbReference type="PDB" id="3DI3"/>
    </source>
</evidence>
<gene>
    <name type="primary">IL7</name>
</gene>
<proteinExistence type="evidence at protein level"/>
<organism>
    <name type="scientific">Homo sapiens</name>
    <name type="common">Human</name>
    <dbReference type="NCBI Taxonomy" id="9606"/>
    <lineage>
        <taxon>Eukaryota</taxon>
        <taxon>Metazoa</taxon>
        <taxon>Chordata</taxon>
        <taxon>Craniata</taxon>
        <taxon>Vertebrata</taxon>
        <taxon>Euteleostomi</taxon>
        <taxon>Mammalia</taxon>
        <taxon>Eutheria</taxon>
        <taxon>Euarchontoglires</taxon>
        <taxon>Primates</taxon>
        <taxon>Haplorrhini</taxon>
        <taxon>Catarrhini</taxon>
        <taxon>Hominidae</taxon>
        <taxon>Homo</taxon>
    </lineage>
</organism>
<name>IL7_HUMAN</name>
<keyword id="KW-0002">3D-structure</keyword>
<keyword id="KW-0025">Alternative splicing</keyword>
<keyword id="KW-0202">Cytokine</keyword>
<keyword id="KW-0225">Disease variant</keyword>
<keyword id="KW-1015">Disulfide bond</keyword>
<keyword id="KW-0325">Glycoprotein</keyword>
<keyword id="KW-0339">Growth factor</keyword>
<keyword id="KW-1185">Reference proteome</keyword>
<keyword id="KW-0964">Secreted</keyword>
<keyword id="KW-0732">Signal</keyword>
<accession>P13232</accession>
<accession>A0N0L3</accession>
<accession>Q5FBY5</accession>
<accession>Q5FBY9</accession>
<sequence length="177" mass="20187">MFHVSFRYIFGLPPLILVLLPVASSDCDIEGKDGKQYESVLMVSIDQLLDSMKEIGSNCLNNEFNFFKRHICDANKEGMFLFRAARKLRQFLKMNSTGDFDLHLLKVSEGTTILLNCTGQVKGRKPAALGEAQPTKSLEENKSLKEQKKLNDLCFLKRLLQEIKTCWNKILMGTKEH</sequence>
<reference key="1">
    <citation type="journal article" date="1989" name="Proc. Natl. Acad. Sci. U.S.A.">
        <title>Human interleukin 7: molecular cloning and growth factor activity on human and murine B-lineage cells.</title>
        <authorList>
            <person name="Goodwin R.G."/>
            <person name="Lupton S."/>
            <person name="Schmierer A."/>
            <person name="Hjerrild K.J."/>
            <person name="Jerzy R."/>
            <person name="Clevenger W."/>
            <person name="Gillis S."/>
            <person name="Cosman D."/>
            <person name="Namen A.E."/>
        </authorList>
    </citation>
    <scope>NUCLEOTIDE SEQUENCE [MRNA] (ISOFORM 1)</scope>
</reference>
<reference key="2">
    <citation type="journal article" date="1990" name="J. Immunol.">
        <title>Characterization of the human and murine IL-7 genes.</title>
        <authorList>
            <person name="Lupton S.D."/>
            <person name="Gimpel S."/>
            <person name="Jerzy R."/>
            <person name="Brunton L.L."/>
            <person name="Hjerrild K.A."/>
            <person name="Cosman D."/>
            <person name="Goodwin R.G."/>
        </authorList>
    </citation>
    <scope>NUCLEOTIDE SEQUENCE [GENOMIC DNA]</scope>
</reference>
<reference key="3">
    <citation type="submission" date="2003-02" db="EMBL/GenBank/DDBJ databases">
        <title>interleukin7 mRNA,nirs splice variant2.</title>
        <authorList>
            <person name="Sameshima E."/>
            <person name="Tabata Y."/>
            <person name="Hayashi A."/>
            <person name="Iida K."/>
            <person name="Mitsuyama M."/>
            <person name="Kanai S."/>
            <person name="Furuya T."/>
        </authorList>
    </citation>
    <scope>NUCLEOTIDE SEQUENCE [MRNA] (ISOFORMS 2 AND 3)</scope>
</reference>
<reference key="4">
    <citation type="submission" date="2006-10" db="EMBL/GenBank/DDBJ databases">
        <authorList>
            <person name="Livingston R.J."/>
            <person name="Shaffer T."/>
            <person name="McFarland I."/>
            <person name="Nguyen C.P."/>
            <person name="Stanaway I.B."/>
            <person name="Rajkumar N."/>
            <person name="Johnson E.J."/>
            <person name="da Ponte S.H."/>
            <person name="Willa H."/>
            <person name="Ahearn M.O."/>
            <person name="Bertucci C."/>
            <person name="Acklestad J."/>
            <person name="Carroll A."/>
            <person name="Swanson J."/>
            <person name="Gildersleeve H.I."/>
            <person name="Nickerson D.A."/>
        </authorList>
    </citation>
    <scope>NUCLEOTIDE SEQUENCE [GENOMIC DNA]</scope>
</reference>
<reference key="5">
    <citation type="journal article" date="2006" name="Nature">
        <title>DNA sequence and analysis of human chromosome 8.</title>
        <authorList>
            <person name="Nusbaum C."/>
            <person name="Mikkelsen T.S."/>
            <person name="Zody M.C."/>
            <person name="Asakawa S."/>
            <person name="Taudien S."/>
            <person name="Garber M."/>
            <person name="Kodira C.D."/>
            <person name="Schueler M.G."/>
            <person name="Shimizu A."/>
            <person name="Whittaker C.A."/>
            <person name="Chang J.L."/>
            <person name="Cuomo C.A."/>
            <person name="Dewar K."/>
            <person name="FitzGerald M.G."/>
            <person name="Yang X."/>
            <person name="Allen N.R."/>
            <person name="Anderson S."/>
            <person name="Asakawa T."/>
            <person name="Blechschmidt K."/>
            <person name="Bloom T."/>
            <person name="Borowsky M.L."/>
            <person name="Butler J."/>
            <person name="Cook A."/>
            <person name="Corum B."/>
            <person name="DeArellano K."/>
            <person name="DeCaprio D."/>
            <person name="Dooley K.T."/>
            <person name="Dorris L. III"/>
            <person name="Engels R."/>
            <person name="Gloeckner G."/>
            <person name="Hafez N."/>
            <person name="Hagopian D.S."/>
            <person name="Hall J.L."/>
            <person name="Ishikawa S.K."/>
            <person name="Jaffe D.B."/>
            <person name="Kamat A."/>
            <person name="Kudoh J."/>
            <person name="Lehmann R."/>
            <person name="Lokitsang T."/>
            <person name="Macdonald P."/>
            <person name="Major J.E."/>
            <person name="Matthews C.D."/>
            <person name="Mauceli E."/>
            <person name="Menzel U."/>
            <person name="Mihalev A.H."/>
            <person name="Minoshima S."/>
            <person name="Murayama Y."/>
            <person name="Naylor J.W."/>
            <person name="Nicol R."/>
            <person name="Nguyen C."/>
            <person name="O'Leary S.B."/>
            <person name="O'Neill K."/>
            <person name="Parker S.C.J."/>
            <person name="Polley A."/>
            <person name="Raymond C.K."/>
            <person name="Reichwald K."/>
            <person name="Rodriguez J."/>
            <person name="Sasaki T."/>
            <person name="Schilhabel M."/>
            <person name="Siddiqui R."/>
            <person name="Smith C.L."/>
            <person name="Sneddon T.P."/>
            <person name="Talamas J.A."/>
            <person name="Tenzin P."/>
            <person name="Topham K."/>
            <person name="Venkataraman V."/>
            <person name="Wen G."/>
            <person name="Yamazaki S."/>
            <person name="Young S.K."/>
            <person name="Zeng Q."/>
            <person name="Zimmer A.R."/>
            <person name="Rosenthal A."/>
            <person name="Birren B.W."/>
            <person name="Platzer M."/>
            <person name="Shimizu N."/>
            <person name="Lander E.S."/>
        </authorList>
    </citation>
    <scope>NUCLEOTIDE SEQUENCE [LARGE SCALE GENOMIC DNA]</scope>
</reference>
<reference key="6">
    <citation type="submission" date="2005-07" db="EMBL/GenBank/DDBJ databases">
        <authorList>
            <person name="Mural R.J."/>
            <person name="Istrail S."/>
            <person name="Sutton G.G."/>
            <person name="Florea L."/>
            <person name="Halpern A.L."/>
            <person name="Mobarry C.M."/>
            <person name="Lippert R."/>
            <person name="Walenz B."/>
            <person name="Shatkay H."/>
            <person name="Dew I."/>
            <person name="Miller J.R."/>
            <person name="Flanigan M.J."/>
            <person name="Edwards N.J."/>
            <person name="Bolanos R."/>
            <person name="Fasulo D."/>
            <person name="Halldorsson B.V."/>
            <person name="Hannenhalli S."/>
            <person name="Turner R."/>
            <person name="Yooseph S."/>
            <person name="Lu F."/>
            <person name="Nusskern D.R."/>
            <person name="Shue B.C."/>
            <person name="Zheng X.H."/>
            <person name="Zhong F."/>
            <person name="Delcher A.L."/>
            <person name="Huson D.H."/>
            <person name="Kravitz S.A."/>
            <person name="Mouchard L."/>
            <person name="Reinert K."/>
            <person name="Remington K.A."/>
            <person name="Clark A.G."/>
            <person name="Waterman M.S."/>
            <person name="Eichler E.E."/>
            <person name="Adams M.D."/>
            <person name="Hunkapiller M.W."/>
            <person name="Myers E.W."/>
            <person name="Venter J.C."/>
        </authorList>
    </citation>
    <scope>NUCLEOTIDE SEQUENCE [LARGE SCALE GENOMIC DNA]</scope>
</reference>
<reference key="7">
    <citation type="journal article" date="2004" name="Genome Res.">
        <title>The status, quality, and expansion of the NIH full-length cDNA project: the Mammalian Gene Collection (MGC).</title>
        <authorList>
            <consortium name="The MGC Project Team"/>
        </authorList>
    </citation>
    <scope>NUCLEOTIDE SEQUENCE [LARGE SCALE MRNA] (ISOFORM 1)</scope>
    <source>
        <tissue>Pancreas</tissue>
    </source>
</reference>
<reference key="8">
    <citation type="journal article" date="1995" name="J. Immunol.">
        <title>The growth response to IL-7 during normal human B cell ontogeny is restricted to B-lineage cells expressing CD34.</title>
        <authorList>
            <person name="Dittel B.N."/>
            <person name="LeBien T.W."/>
        </authorList>
    </citation>
    <scope>FUNCTION</scope>
</reference>
<reference key="9">
    <citation type="journal article" date="1997" name="J. Biol. Chem.">
        <title>Disulfide bond assignment in human interleukin-7 by matrix-assisted laser desorption/ionization mass spectroscopy and site-directed cysteine to serine mutational analysis.</title>
        <authorList>
            <person name="Cosenza L."/>
            <person name="Sweeney E."/>
            <person name="Murphy J.R."/>
        </authorList>
    </citation>
    <scope>DISULFIDE BONDS</scope>
    <scope>IDENTIFICATION BY MASS SPECTROMETRY</scope>
</reference>
<reference key="10">
    <citation type="journal article" date="1994" name="Science">
        <title>Functional participation of the IL-2 receptor gamma chain in IL-7 receptor complexes.</title>
        <authorList>
            <person name="Kondo M."/>
            <person name="Takeshita T."/>
            <person name="Higuchi M."/>
            <person name="Nakamura M."/>
            <person name="Sudo T."/>
            <person name="Nishikawa S."/>
            <person name="Sugamura K."/>
        </authorList>
    </citation>
    <scope>FUNCTION</scope>
    <scope>INTERACTION WITH IL7R AND CSF2RG</scope>
</reference>
<reference key="11">
    <citation type="journal article" date="2008" name="J. Immunol.">
        <title>IL-7 activates the phosphatidylinositol 3-kinase/AKT pathway in normal human thymocytes but not normal human B cell precursors.</title>
        <authorList>
            <person name="Johnson S.E."/>
            <person name="Shah N."/>
            <person name="Bajer A.A."/>
            <person name="LeBien T.W."/>
        </authorList>
    </citation>
    <scope>FUNCTION</scope>
</reference>
<reference key="12">
    <citation type="journal article" date="2010" name="Proc. Natl. Acad. Sci. U.S.A.">
        <title>Thymic stromal lymphopoietin-mediated STAT5 phosphorylation via kinases JAK1 and JAK2 reveals a key difference from IL-7-induced signaling.</title>
        <authorList>
            <person name="Rochman Y."/>
            <person name="Kashyap M."/>
            <person name="Robinson G.W."/>
            <person name="Sakamoto K."/>
            <person name="Gomez-Rodriguez J."/>
            <person name="Wagner K.U."/>
            <person name="Leonard W.J."/>
        </authorList>
    </citation>
    <scope>FUNCTION</scope>
</reference>
<reference key="13">
    <citation type="journal article" date="2015" name="J. Immunol.">
        <title>Recycled IL-7 Can Be Delivered to Neighboring T Cells.</title>
        <authorList>
            <person name="Bazdar D.A."/>
            <person name="Kalinowska M."/>
            <person name="Panigrahi S."/>
            <person name="Sieg S.F."/>
        </authorList>
    </citation>
    <scope>FUNCTION</scope>
    <scope>SUBCELLULAR LOCATION</scope>
</reference>
<reference key="14">
    <citation type="journal article" date="1996" name="Protein Eng.">
        <title>Prediction of the three-dimensional structure of human interleukin-7 by homology modeling.</title>
        <authorList>
            <person name="Kroemer R.T."/>
            <person name="Doughty S.W."/>
            <person name="Robinson A.J."/>
            <person name="Richards W.G."/>
        </authorList>
    </citation>
    <scope>3D-STRUCTURE MODELING</scope>
</reference>
<reference key="15">
    <citation type="journal article" date="2000" name="Protein Sci.">
        <title>Comparative model building of interleukin-7 using interleukin-4 as a template: a structural hypothesis that displays atypical surface chemistry in helix D important for receptor activation.</title>
        <authorList>
            <person name="Cosenza L."/>
            <person name="Rosenbach A."/>
            <person name="White J.V."/>
            <person name="Murphy J.R."/>
            <person name="Smith T.F."/>
        </authorList>
    </citation>
    <scope>3D-STRUCTURE MODELING</scope>
</reference>
<reference key="16">
    <citation type="journal article" date="2009" name="Structure">
        <title>Structural and biophysical studies of the human IL-7/IL-7Ralpha complex.</title>
        <authorList>
            <person name="McElroy C.A."/>
            <person name="Dohm J.A."/>
            <person name="Walsh S.T."/>
        </authorList>
    </citation>
    <scope>X-RAY CRYSTALLOGRAPHY (2.7 ANGSTROMS) OF 26-177 IN COMPLEX WITH IL7R</scope>
    <scope>DISULFIDE BONDS</scope>
</reference>
<reference key="17">
    <citation type="journal article" date="2015" name="J. Am. Acad. Dermatol.">
        <title>Generalized verrucosis and HPV-3 susceptibility associated with CD4 T-cell lymphopenia caused by inherited human interleukin-7 deficiency.</title>
        <authorList>
            <person name="Horev L."/>
            <person name="Unger S."/>
            <person name="Molho-Pessach V."/>
            <person name="Meir T."/>
            <person name="Maly A."/>
            <person name="Stepensky P."/>
            <person name="Zamir M."/>
            <person name="Keller B."/>
            <person name="Babay S."/>
            <person name="Warnatz K."/>
            <person name="Ramot Y."/>
            <person name="Zlotogorski A."/>
        </authorList>
    </citation>
    <scope>VARIANT IMD130 69-ARG--HIS-177 DEL</scope>
    <scope>INVOLVEMENT IN IMD130</scope>
</reference>
<dbReference type="EMBL" id="J04156">
    <property type="protein sequence ID" value="AAA59156.1"/>
    <property type="molecule type" value="mRNA"/>
</dbReference>
<dbReference type="EMBL" id="M29053">
    <property type="protein sequence ID" value="AAC63047.1"/>
    <property type="molecule type" value="Genomic_DNA"/>
</dbReference>
<dbReference type="EMBL" id="M29048">
    <property type="protein sequence ID" value="AAC63047.1"/>
    <property type="status" value="JOINED"/>
    <property type="molecule type" value="Genomic_DNA"/>
</dbReference>
<dbReference type="EMBL" id="M29049">
    <property type="protein sequence ID" value="AAC63047.1"/>
    <property type="status" value="JOINED"/>
    <property type="molecule type" value="Genomic_DNA"/>
</dbReference>
<dbReference type="EMBL" id="M29050">
    <property type="protein sequence ID" value="AAC63047.1"/>
    <property type="status" value="JOINED"/>
    <property type="molecule type" value="Genomic_DNA"/>
</dbReference>
<dbReference type="EMBL" id="M29051">
    <property type="protein sequence ID" value="AAC63047.1"/>
    <property type="status" value="JOINED"/>
    <property type="molecule type" value="Genomic_DNA"/>
</dbReference>
<dbReference type="EMBL" id="M29052">
    <property type="protein sequence ID" value="AAC63047.1"/>
    <property type="status" value="JOINED"/>
    <property type="molecule type" value="Genomic_DNA"/>
</dbReference>
<dbReference type="EMBL" id="AB102879">
    <property type="protein sequence ID" value="BAD89408.1"/>
    <property type="molecule type" value="mRNA"/>
</dbReference>
<dbReference type="EMBL" id="AB102883">
    <property type="protein sequence ID" value="BAD89412.1"/>
    <property type="molecule type" value="mRNA"/>
</dbReference>
<dbReference type="EMBL" id="EF064721">
    <property type="protein sequence ID" value="ABK41904.1"/>
    <property type="molecule type" value="Genomic_DNA"/>
</dbReference>
<dbReference type="EMBL" id="AC083837">
    <property type="status" value="NOT_ANNOTATED_CDS"/>
    <property type="molecule type" value="Genomic_DNA"/>
</dbReference>
<dbReference type="EMBL" id="AC100854">
    <property type="status" value="NOT_ANNOTATED_CDS"/>
    <property type="molecule type" value="Genomic_DNA"/>
</dbReference>
<dbReference type="EMBL" id="CH471068">
    <property type="protein sequence ID" value="EAW87060.1"/>
    <property type="molecule type" value="Genomic_DNA"/>
</dbReference>
<dbReference type="EMBL" id="CH471068">
    <property type="protein sequence ID" value="EAW87062.1"/>
    <property type="molecule type" value="Genomic_DNA"/>
</dbReference>
<dbReference type="EMBL" id="BC047698">
    <property type="protein sequence ID" value="AAH47698.1"/>
    <property type="molecule type" value="mRNA"/>
</dbReference>
<dbReference type="CCDS" id="CCDS56541.1">
    <molecule id="P13232-2"/>
</dbReference>
<dbReference type="CCDS" id="CCDS6224.1">
    <molecule id="P13232-1"/>
</dbReference>
<dbReference type="PIR" id="A43527">
    <property type="entry name" value="A32223"/>
</dbReference>
<dbReference type="PIR" id="B32223">
    <property type="entry name" value="B32223"/>
</dbReference>
<dbReference type="PIR" id="C32223">
    <property type="entry name" value="C32223"/>
</dbReference>
<dbReference type="RefSeq" id="NP_000871.1">
    <molecule id="P13232-1"/>
    <property type="nucleotide sequence ID" value="NM_000880.4"/>
</dbReference>
<dbReference type="RefSeq" id="NP_001186815.1">
    <molecule id="P13232-2"/>
    <property type="nucleotide sequence ID" value="NM_001199886.2"/>
</dbReference>
<dbReference type="RefSeq" id="NP_001186816.1">
    <property type="nucleotide sequence ID" value="NM_001199887.1"/>
</dbReference>
<dbReference type="RefSeq" id="NP_001186817.1">
    <property type="nucleotide sequence ID" value="NM_001199888.1"/>
</dbReference>
<dbReference type="PDB" id="3DI2">
    <property type="method" value="X-ray"/>
    <property type="resolution" value="2.70 A"/>
    <property type="chains" value="A/C=26-177"/>
</dbReference>
<dbReference type="PDB" id="3DI3">
    <property type="method" value="X-ray"/>
    <property type="resolution" value="2.90 A"/>
    <property type="chains" value="A=26-177"/>
</dbReference>
<dbReference type="PDBsum" id="3DI2"/>
<dbReference type="PDBsum" id="3DI3"/>
<dbReference type="SMR" id="P13232"/>
<dbReference type="BioGRID" id="109788">
    <property type="interactions" value="12"/>
</dbReference>
<dbReference type="ComplexPortal" id="CPX-493">
    <property type="entry name" value="Interleukin-7 sIL7RA-IL2RG receptor-ligand potentiating complex"/>
</dbReference>
<dbReference type="ComplexPortal" id="CPX-9102">
    <property type="entry name" value="Interleukin-7 mIL7R-IL2RG receptor-ligand signalling complex"/>
</dbReference>
<dbReference type="CORUM" id="P13232"/>
<dbReference type="DIP" id="DIP-3044N"/>
<dbReference type="FunCoup" id="P13232">
    <property type="interactions" value="774"/>
</dbReference>
<dbReference type="IntAct" id="P13232">
    <property type="interactions" value="7"/>
</dbReference>
<dbReference type="STRING" id="9606.ENSP00000263851"/>
<dbReference type="GlyCosmos" id="P13232">
    <property type="glycosylation" value="3 sites, No reported glycans"/>
</dbReference>
<dbReference type="GlyGen" id="P13232">
    <property type="glycosylation" value="3 sites"/>
</dbReference>
<dbReference type="BioMuta" id="IL7"/>
<dbReference type="DMDM" id="124354"/>
<dbReference type="MassIVE" id="P13232"/>
<dbReference type="PaxDb" id="9606-ENSP00000263851"/>
<dbReference type="PeptideAtlas" id="P13232"/>
<dbReference type="ProteomicsDB" id="52902">
    <molecule id="P13232-1"/>
</dbReference>
<dbReference type="ProteomicsDB" id="52903">
    <molecule id="P13232-2"/>
</dbReference>
<dbReference type="ProteomicsDB" id="62792"/>
<dbReference type="Antibodypedia" id="12401">
    <property type="antibodies" value="798 antibodies from 38 providers"/>
</dbReference>
<dbReference type="DNASU" id="3574"/>
<dbReference type="Ensembl" id="ENST00000263851.9">
    <molecule id="P13232-1"/>
    <property type="protein sequence ID" value="ENSP00000263851.4"/>
    <property type="gene ID" value="ENSG00000104432.15"/>
</dbReference>
<dbReference type="Ensembl" id="ENST00000520269.5">
    <molecule id="P13232-2"/>
    <property type="protein sequence ID" value="ENSP00000427750.1"/>
    <property type="gene ID" value="ENSG00000104432.15"/>
</dbReference>
<dbReference type="GeneID" id="3574"/>
<dbReference type="KEGG" id="hsa:3574"/>
<dbReference type="MANE-Select" id="ENST00000263851.9">
    <property type="protein sequence ID" value="ENSP00000263851.4"/>
    <property type="RefSeq nucleotide sequence ID" value="NM_000880.4"/>
    <property type="RefSeq protein sequence ID" value="NP_000871.1"/>
</dbReference>
<dbReference type="UCSC" id="uc003ybg.3">
    <molecule id="P13232-1"/>
    <property type="organism name" value="human"/>
</dbReference>
<dbReference type="AGR" id="HGNC:6023"/>
<dbReference type="CTD" id="3574"/>
<dbReference type="DisGeNET" id="3574"/>
<dbReference type="GeneCards" id="IL7"/>
<dbReference type="HGNC" id="HGNC:6023">
    <property type="gene designation" value="IL7"/>
</dbReference>
<dbReference type="HPA" id="ENSG00000104432">
    <property type="expression patterns" value="Low tissue specificity"/>
</dbReference>
<dbReference type="MalaCards" id="IL7"/>
<dbReference type="MIM" id="146660">
    <property type="type" value="gene"/>
</dbReference>
<dbReference type="MIM" id="618309">
    <property type="type" value="phenotype"/>
</dbReference>
<dbReference type="neXtProt" id="NX_P13232"/>
<dbReference type="OpenTargets" id="ENSG00000104432"/>
<dbReference type="Orphanet" id="302">
    <property type="disease" value="Inherited epidermodysplasia verruciformis"/>
</dbReference>
<dbReference type="PharmGKB" id="PA29839"/>
<dbReference type="VEuPathDB" id="HostDB:ENSG00000104432"/>
<dbReference type="eggNOG" id="ENOG502SW6R">
    <property type="taxonomic scope" value="Eukaryota"/>
</dbReference>
<dbReference type="GeneTree" id="ENSGT00390000004451"/>
<dbReference type="InParanoid" id="P13232"/>
<dbReference type="OMA" id="NMSAEYR"/>
<dbReference type="OrthoDB" id="9829887at2759"/>
<dbReference type="PAN-GO" id="P13232">
    <property type="GO annotations" value="3 GO annotations based on evolutionary models"/>
</dbReference>
<dbReference type="PhylomeDB" id="P13232"/>
<dbReference type="TreeFam" id="TF338065"/>
<dbReference type="PathwayCommons" id="P13232"/>
<dbReference type="Reactome" id="R-HSA-1266695">
    <property type="pathway name" value="Interleukin-7 signaling"/>
</dbReference>
<dbReference type="SignaLink" id="P13232"/>
<dbReference type="SIGNOR" id="P13232"/>
<dbReference type="BioGRID-ORCS" id="3574">
    <property type="hits" value="18 hits in 1137 CRISPR screens"/>
</dbReference>
<dbReference type="ChiTaRS" id="IL7">
    <property type="organism name" value="human"/>
</dbReference>
<dbReference type="EvolutionaryTrace" id="P13232"/>
<dbReference type="GeneWiki" id="Interleukin_7"/>
<dbReference type="GenomeRNAi" id="3574"/>
<dbReference type="Pharos" id="P13232">
    <property type="development level" value="Tbio"/>
</dbReference>
<dbReference type="PRO" id="PR:P13232"/>
<dbReference type="Proteomes" id="UP000005640">
    <property type="component" value="Chromosome 8"/>
</dbReference>
<dbReference type="RNAct" id="P13232">
    <property type="molecule type" value="protein"/>
</dbReference>
<dbReference type="Bgee" id="ENSG00000104432">
    <property type="expression patterns" value="Expressed in sperm and 138 other cell types or tissues"/>
</dbReference>
<dbReference type="ExpressionAtlas" id="P13232">
    <property type="expression patterns" value="baseline and differential"/>
</dbReference>
<dbReference type="GO" id="GO:0062023">
    <property type="term" value="C:collagen-containing extracellular matrix"/>
    <property type="evidence" value="ECO:0007005"/>
    <property type="project" value="BHF-UCL"/>
</dbReference>
<dbReference type="GO" id="GO:0005576">
    <property type="term" value="C:extracellular region"/>
    <property type="evidence" value="ECO:0000314"/>
    <property type="project" value="UniProtKB"/>
</dbReference>
<dbReference type="GO" id="GO:0005615">
    <property type="term" value="C:extracellular space"/>
    <property type="evidence" value="ECO:0000314"/>
    <property type="project" value="UniProt"/>
</dbReference>
<dbReference type="GO" id="GO:0005125">
    <property type="term" value="F:cytokine activity"/>
    <property type="evidence" value="ECO:0000314"/>
    <property type="project" value="UniProtKB"/>
</dbReference>
<dbReference type="GO" id="GO:0008083">
    <property type="term" value="F:growth factor activity"/>
    <property type="evidence" value="ECO:0000250"/>
    <property type="project" value="UniProtKB"/>
</dbReference>
<dbReference type="GO" id="GO:0005139">
    <property type="term" value="F:interleukin-7 receptor binding"/>
    <property type="evidence" value="ECO:0000304"/>
    <property type="project" value="ProtInc"/>
</dbReference>
<dbReference type="GO" id="GO:0009887">
    <property type="term" value="P:animal organ morphogenesis"/>
    <property type="evidence" value="ECO:0000304"/>
    <property type="project" value="ProtInc"/>
</dbReference>
<dbReference type="GO" id="GO:0042100">
    <property type="term" value="P:B cell proliferation"/>
    <property type="evidence" value="ECO:0007669"/>
    <property type="project" value="Ensembl"/>
</dbReference>
<dbReference type="GO" id="GO:0045453">
    <property type="term" value="P:bone resorption"/>
    <property type="evidence" value="ECO:0000250"/>
    <property type="project" value="UniProtKB"/>
</dbReference>
<dbReference type="GO" id="GO:0007267">
    <property type="term" value="P:cell-cell signaling"/>
    <property type="evidence" value="ECO:0000304"/>
    <property type="project" value="ProtInc"/>
</dbReference>
<dbReference type="GO" id="GO:0019221">
    <property type="term" value="P:cytokine-mediated signaling pathway"/>
    <property type="evidence" value="ECO:0000314"/>
    <property type="project" value="UniProtKB"/>
</dbReference>
<dbReference type="GO" id="GO:0097191">
    <property type="term" value="P:extrinsic apoptotic signaling pathway"/>
    <property type="evidence" value="ECO:0007669"/>
    <property type="project" value="Ensembl"/>
</dbReference>
<dbReference type="GO" id="GO:0048873">
    <property type="term" value="P:homeostasis of number of cells within a tissue"/>
    <property type="evidence" value="ECO:0007669"/>
    <property type="project" value="Ensembl"/>
</dbReference>
<dbReference type="GO" id="GO:0006959">
    <property type="term" value="P:humoral immune response"/>
    <property type="evidence" value="ECO:0000304"/>
    <property type="project" value="ProtInc"/>
</dbReference>
<dbReference type="GO" id="GO:0038111">
    <property type="term" value="P:interleukin-7-mediated signaling pathway"/>
    <property type="evidence" value="ECO:0000314"/>
    <property type="project" value="UniProt"/>
</dbReference>
<dbReference type="GO" id="GO:0043066">
    <property type="term" value="P:negative regulation of apoptotic process"/>
    <property type="evidence" value="ECO:0000250"/>
    <property type="project" value="UniProtKB"/>
</dbReference>
<dbReference type="GO" id="GO:2001240">
    <property type="term" value="P:negative regulation of extrinsic apoptotic signaling pathway in absence of ligand"/>
    <property type="evidence" value="ECO:0007669"/>
    <property type="project" value="Ensembl"/>
</dbReference>
<dbReference type="GO" id="GO:0035265">
    <property type="term" value="P:organ growth"/>
    <property type="evidence" value="ECO:0007669"/>
    <property type="project" value="Ensembl"/>
</dbReference>
<dbReference type="GO" id="GO:0045579">
    <property type="term" value="P:positive regulation of B cell differentiation"/>
    <property type="evidence" value="ECO:0007669"/>
    <property type="project" value="Ensembl"/>
</dbReference>
<dbReference type="GO" id="GO:0030890">
    <property type="term" value="P:positive regulation of B cell proliferation"/>
    <property type="evidence" value="ECO:0000250"/>
    <property type="project" value="UniProtKB"/>
</dbReference>
<dbReference type="GO" id="GO:0008284">
    <property type="term" value="P:positive regulation of cell population proliferation"/>
    <property type="evidence" value="ECO:0000304"/>
    <property type="project" value="ProtInc"/>
</dbReference>
<dbReference type="GO" id="GO:0032722">
    <property type="term" value="P:positive regulation of chemokine production"/>
    <property type="evidence" value="ECO:0000314"/>
    <property type="project" value="UniProtKB"/>
</dbReference>
<dbReference type="GO" id="GO:0001961">
    <property type="term" value="P:positive regulation of cytokine-mediated signaling pathway"/>
    <property type="evidence" value="ECO:0000314"/>
    <property type="project" value="UniProtKB"/>
</dbReference>
<dbReference type="GO" id="GO:0046622">
    <property type="term" value="P:positive regulation of organ growth"/>
    <property type="evidence" value="ECO:0007669"/>
    <property type="project" value="Ensembl"/>
</dbReference>
<dbReference type="GO" id="GO:0045582">
    <property type="term" value="P:positive regulation of T cell differentiation"/>
    <property type="evidence" value="ECO:0000250"/>
    <property type="project" value="UniProtKB"/>
</dbReference>
<dbReference type="GO" id="GO:0002360">
    <property type="term" value="P:T cell lineage commitment"/>
    <property type="evidence" value="ECO:0007669"/>
    <property type="project" value="Ensembl"/>
</dbReference>
<dbReference type="FunFam" id="1.20.1250.50:FF:000001">
    <property type="entry name" value="Interleukin-7"/>
    <property type="match status" value="1"/>
</dbReference>
<dbReference type="Gene3D" id="1.20.1250.50">
    <property type="match status" value="1"/>
</dbReference>
<dbReference type="InterPro" id="IPR001181">
    <property type="entry name" value="IL-7"/>
</dbReference>
<dbReference type="InterPro" id="IPR018049">
    <property type="entry name" value="IL-7/IL-9_CS"/>
</dbReference>
<dbReference type="InterPro" id="IPR038325">
    <property type="entry name" value="IL7_sf"/>
</dbReference>
<dbReference type="PANTHER" id="PTHR48492">
    <property type="entry name" value="INTERLEUKIN-7"/>
    <property type="match status" value="1"/>
</dbReference>
<dbReference type="PANTHER" id="PTHR48492:SF1">
    <property type="entry name" value="INTERLEUKIN-7"/>
    <property type="match status" value="1"/>
</dbReference>
<dbReference type="Pfam" id="PF01415">
    <property type="entry name" value="IL7"/>
    <property type="match status" value="1"/>
</dbReference>
<dbReference type="PIRSF" id="PIRSF001942">
    <property type="entry name" value="IL-7"/>
    <property type="match status" value="1"/>
</dbReference>
<dbReference type="PRINTS" id="PR00435">
    <property type="entry name" value="INTERLEUKIN7"/>
</dbReference>
<dbReference type="SMART" id="SM00127">
    <property type="entry name" value="IL7"/>
    <property type="match status" value="1"/>
</dbReference>
<dbReference type="PROSITE" id="PS00255">
    <property type="entry name" value="INTERLEUKIN_7_9"/>
    <property type="match status" value="1"/>
</dbReference>